<organism>
    <name type="scientific">Serratia proteamaculans (strain 568)</name>
    <dbReference type="NCBI Taxonomy" id="399741"/>
    <lineage>
        <taxon>Bacteria</taxon>
        <taxon>Pseudomonadati</taxon>
        <taxon>Pseudomonadota</taxon>
        <taxon>Gammaproteobacteria</taxon>
        <taxon>Enterobacterales</taxon>
        <taxon>Yersiniaceae</taxon>
        <taxon>Serratia</taxon>
    </lineage>
</organism>
<keyword id="KW-0067">ATP-binding</keyword>
<keyword id="KW-0436">Ligase</keyword>
<keyword id="KW-0479">Metal-binding</keyword>
<keyword id="KW-0547">Nucleotide-binding</keyword>
<keyword id="KW-0671">Queuosine biosynthesis</keyword>
<keyword id="KW-0862">Zinc</keyword>
<accession>A8GAR6</accession>
<gene>
    <name evidence="1" type="primary">queC</name>
    <name type="ordered locus">Spro_1102</name>
</gene>
<feature type="chain" id="PRO_1000069798" description="7-cyano-7-deazaguanine synthase">
    <location>
        <begin position="1"/>
        <end position="232"/>
    </location>
</feature>
<feature type="binding site" evidence="1">
    <location>
        <begin position="8"/>
        <end position="18"/>
    </location>
    <ligand>
        <name>ATP</name>
        <dbReference type="ChEBI" id="CHEBI:30616"/>
    </ligand>
</feature>
<feature type="binding site" evidence="1">
    <location>
        <position position="189"/>
    </location>
    <ligand>
        <name>Zn(2+)</name>
        <dbReference type="ChEBI" id="CHEBI:29105"/>
    </ligand>
</feature>
<feature type="binding site" evidence="1">
    <location>
        <position position="198"/>
    </location>
    <ligand>
        <name>Zn(2+)</name>
        <dbReference type="ChEBI" id="CHEBI:29105"/>
    </ligand>
</feature>
<feature type="binding site" evidence="1">
    <location>
        <position position="201"/>
    </location>
    <ligand>
        <name>Zn(2+)</name>
        <dbReference type="ChEBI" id="CHEBI:29105"/>
    </ligand>
</feature>
<feature type="binding site" evidence="1">
    <location>
        <position position="204"/>
    </location>
    <ligand>
        <name>Zn(2+)</name>
        <dbReference type="ChEBI" id="CHEBI:29105"/>
    </ligand>
</feature>
<proteinExistence type="inferred from homology"/>
<reference key="1">
    <citation type="submission" date="2007-09" db="EMBL/GenBank/DDBJ databases">
        <title>Complete sequence of chromosome of Serratia proteamaculans 568.</title>
        <authorList>
            <consortium name="US DOE Joint Genome Institute"/>
            <person name="Copeland A."/>
            <person name="Lucas S."/>
            <person name="Lapidus A."/>
            <person name="Barry K."/>
            <person name="Glavina del Rio T."/>
            <person name="Dalin E."/>
            <person name="Tice H."/>
            <person name="Pitluck S."/>
            <person name="Chain P."/>
            <person name="Malfatti S."/>
            <person name="Shin M."/>
            <person name="Vergez L."/>
            <person name="Schmutz J."/>
            <person name="Larimer F."/>
            <person name="Land M."/>
            <person name="Hauser L."/>
            <person name="Kyrpides N."/>
            <person name="Kim E."/>
            <person name="Taghavi S."/>
            <person name="Newman L."/>
            <person name="Vangronsveld J."/>
            <person name="van der Lelie D."/>
            <person name="Richardson P."/>
        </authorList>
    </citation>
    <scope>NUCLEOTIDE SEQUENCE [LARGE SCALE GENOMIC DNA]</scope>
    <source>
        <strain>568</strain>
    </source>
</reference>
<protein>
    <recommendedName>
        <fullName evidence="1">7-cyano-7-deazaguanine synthase</fullName>
        <ecNumber evidence="1">6.3.4.20</ecNumber>
    </recommendedName>
    <alternativeName>
        <fullName evidence="1">7-cyano-7-carbaguanine synthase</fullName>
    </alternativeName>
    <alternativeName>
        <fullName evidence="1">PreQ(0) synthase</fullName>
    </alternativeName>
    <alternativeName>
        <fullName evidence="1">Queuosine biosynthesis protein QueC</fullName>
    </alternativeName>
</protein>
<comment type="function">
    <text evidence="1">Catalyzes the ATP-dependent conversion of 7-carboxy-7-deazaguanine (CDG) to 7-cyano-7-deazaguanine (preQ(0)).</text>
</comment>
<comment type="catalytic activity">
    <reaction evidence="1">
        <text>7-carboxy-7-deazaguanine + NH4(+) + ATP = 7-cyano-7-deazaguanine + ADP + phosphate + H2O + H(+)</text>
        <dbReference type="Rhea" id="RHEA:27982"/>
        <dbReference type="ChEBI" id="CHEBI:15377"/>
        <dbReference type="ChEBI" id="CHEBI:15378"/>
        <dbReference type="ChEBI" id="CHEBI:28938"/>
        <dbReference type="ChEBI" id="CHEBI:30616"/>
        <dbReference type="ChEBI" id="CHEBI:43474"/>
        <dbReference type="ChEBI" id="CHEBI:45075"/>
        <dbReference type="ChEBI" id="CHEBI:61036"/>
        <dbReference type="ChEBI" id="CHEBI:456216"/>
        <dbReference type="EC" id="6.3.4.20"/>
    </reaction>
</comment>
<comment type="cofactor">
    <cofactor evidence="1">
        <name>Zn(2+)</name>
        <dbReference type="ChEBI" id="CHEBI:29105"/>
    </cofactor>
    <text evidence="1">Binds 1 zinc ion per subunit.</text>
</comment>
<comment type="pathway">
    <text evidence="1">Purine metabolism; 7-cyano-7-deazaguanine biosynthesis.</text>
</comment>
<comment type="similarity">
    <text evidence="1">Belongs to the QueC family.</text>
</comment>
<evidence type="ECO:0000255" key="1">
    <source>
        <dbReference type="HAMAP-Rule" id="MF_01633"/>
    </source>
</evidence>
<dbReference type="EC" id="6.3.4.20" evidence="1"/>
<dbReference type="EMBL" id="CP000826">
    <property type="protein sequence ID" value="ABV40206.1"/>
    <property type="molecule type" value="Genomic_DNA"/>
</dbReference>
<dbReference type="SMR" id="A8GAR6"/>
<dbReference type="STRING" id="399741.Spro_1102"/>
<dbReference type="KEGG" id="spe:Spro_1102"/>
<dbReference type="eggNOG" id="COG0603">
    <property type="taxonomic scope" value="Bacteria"/>
</dbReference>
<dbReference type="HOGENOM" id="CLU_081854_0_0_6"/>
<dbReference type="OrthoDB" id="9789567at2"/>
<dbReference type="UniPathway" id="UPA00391"/>
<dbReference type="GO" id="GO:0005524">
    <property type="term" value="F:ATP binding"/>
    <property type="evidence" value="ECO:0007669"/>
    <property type="project" value="UniProtKB-UniRule"/>
</dbReference>
<dbReference type="GO" id="GO:0016879">
    <property type="term" value="F:ligase activity, forming carbon-nitrogen bonds"/>
    <property type="evidence" value="ECO:0007669"/>
    <property type="project" value="UniProtKB-UniRule"/>
</dbReference>
<dbReference type="GO" id="GO:0008270">
    <property type="term" value="F:zinc ion binding"/>
    <property type="evidence" value="ECO:0007669"/>
    <property type="project" value="UniProtKB-UniRule"/>
</dbReference>
<dbReference type="GO" id="GO:0008616">
    <property type="term" value="P:queuosine biosynthetic process"/>
    <property type="evidence" value="ECO:0007669"/>
    <property type="project" value="UniProtKB-UniRule"/>
</dbReference>
<dbReference type="CDD" id="cd01995">
    <property type="entry name" value="QueC-like"/>
    <property type="match status" value="1"/>
</dbReference>
<dbReference type="FunFam" id="3.40.50.620:FF:000017">
    <property type="entry name" value="7-cyano-7-deazaguanine synthase"/>
    <property type="match status" value="1"/>
</dbReference>
<dbReference type="Gene3D" id="3.40.50.620">
    <property type="entry name" value="HUPs"/>
    <property type="match status" value="1"/>
</dbReference>
<dbReference type="HAMAP" id="MF_01633">
    <property type="entry name" value="QueC"/>
    <property type="match status" value="1"/>
</dbReference>
<dbReference type="InterPro" id="IPR018317">
    <property type="entry name" value="QueC"/>
</dbReference>
<dbReference type="InterPro" id="IPR014729">
    <property type="entry name" value="Rossmann-like_a/b/a_fold"/>
</dbReference>
<dbReference type="NCBIfam" id="TIGR00364">
    <property type="entry name" value="7-cyano-7-deazaguanine synthase QueC"/>
    <property type="match status" value="1"/>
</dbReference>
<dbReference type="NCBIfam" id="NF008317">
    <property type="entry name" value="PRK11106.1"/>
    <property type="match status" value="1"/>
</dbReference>
<dbReference type="PANTHER" id="PTHR42914">
    <property type="entry name" value="7-CYANO-7-DEAZAGUANINE SYNTHASE"/>
    <property type="match status" value="1"/>
</dbReference>
<dbReference type="PANTHER" id="PTHR42914:SF1">
    <property type="entry name" value="7-CYANO-7-DEAZAGUANINE SYNTHASE"/>
    <property type="match status" value="1"/>
</dbReference>
<dbReference type="Pfam" id="PF06508">
    <property type="entry name" value="QueC"/>
    <property type="match status" value="1"/>
</dbReference>
<dbReference type="PIRSF" id="PIRSF006293">
    <property type="entry name" value="ExsB"/>
    <property type="match status" value="1"/>
</dbReference>
<dbReference type="SUPFAM" id="SSF52402">
    <property type="entry name" value="Adenine nucleotide alpha hydrolases-like"/>
    <property type="match status" value="1"/>
</dbReference>
<sequence>MKRAVVVFSGGQDSTTCLIQALKQYDEVHCVTFDYGQRHRAEIEVAQELSVALGAKAHKLLDVGLLNELAISSLTRDNIPVPAYDSTQSNGLPSTFVPGRNILFLTLAAIYAYQVEAEAVITGVCETDFSGYPDCRDEFVKALNQAIVLGIARDIRFETPLMWLNKAETWALADYYHQLELVQQDTLTCYNGIKGNGCGECAACHLRANGLQQYQINKAEVMASLKQKTGLV</sequence>
<name>QUEC_SERP5</name>